<reference key="1">
    <citation type="journal article" date="2005" name="Science">
        <title>The transcriptional landscape of the mammalian genome.</title>
        <authorList>
            <person name="Carninci P."/>
            <person name="Kasukawa T."/>
            <person name="Katayama S."/>
            <person name="Gough J."/>
            <person name="Frith M.C."/>
            <person name="Maeda N."/>
            <person name="Oyama R."/>
            <person name="Ravasi T."/>
            <person name="Lenhard B."/>
            <person name="Wells C."/>
            <person name="Kodzius R."/>
            <person name="Shimokawa K."/>
            <person name="Bajic V.B."/>
            <person name="Brenner S.E."/>
            <person name="Batalov S."/>
            <person name="Forrest A.R."/>
            <person name="Zavolan M."/>
            <person name="Davis M.J."/>
            <person name="Wilming L.G."/>
            <person name="Aidinis V."/>
            <person name="Allen J.E."/>
            <person name="Ambesi-Impiombato A."/>
            <person name="Apweiler R."/>
            <person name="Aturaliya R.N."/>
            <person name="Bailey T.L."/>
            <person name="Bansal M."/>
            <person name="Baxter L."/>
            <person name="Beisel K.W."/>
            <person name="Bersano T."/>
            <person name="Bono H."/>
            <person name="Chalk A.M."/>
            <person name="Chiu K.P."/>
            <person name="Choudhary V."/>
            <person name="Christoffels A."/>
            <person name="Clutterbuck D.R."/>
            <person name="Crowe M.L."/>
            <person name="Dalla E."/>
            <person name="Dalrymple B.P."/>
            <person name="de Bono B."/>
            <person name="Della Gatta G."/>
            <person name="di Bernardo D."/>
            <person name="Down T."/>
            <person name="Engstrom P."/>
            <person name="Fagiolini M."/>
            <person name="Faulkner G."/>
            <person name="Fletcher C.F."/>
            <person name="Fukushima T."/>
            <person name="Furuno M."/>
            <person name="Futaki S."/>
            <person name="Gariboldi M."/>
            <person name="Georgii-Hemming P."/>
            <person name="Gingeras T.R."/>
            <person name="Gojobori T."/>
            <person name="Green R.E."/>
            <person name="Gustincich S."/>
            <person name="Harbers M."/>
            <person name="Hayashi Y."/>
            <person name="Hensch T.K."/>
            <person name="Hirokawa N."/>
            <person name="Hill D."/>
            <person name="Huminiecki L."/>
            <person name="Iacono M."/>
            <person name="Ikeo K."/>
            <person name="Iwama A."/>
            <person name="Ishikawa T."/>
            <person name="Jakt M."/>
            <person name="Kanapin A."/>
            <person name="Katoh M."/>
            <person name="Kawasawa Y."/>
            <person name="Kelso J."/>
            <person name="Kitamura H."/>
            <person name="Kitano H."/>
            <person name="Kollias G."/>
            <person name="Krishnan S.P."/>
            <person name="Kruger A."/>
            <person name="Kummerfeld S.K."/>
            <person name="Kurochkin I.V."/>
            <person name="Lareau L.F."/>
            <person name="Lazarevic D."/>
            <person name="Lipovich L."/>
            <person name="Liu J."/>
            <person name="Liuni S."/>
            <person name="McWilliam S."/>
            <person name="Madan Babu M."/>
            <person name="Madera M."/>
            <person name="Marchionni L."/>
            <person name="Matsuda H."/>
            <person name="Matsuzawa S."/>
            <person name="Miki H."/>
            <person name="Mignone F."/>
            <person name="Miyake S."/>
            <person name="Morris K."/>
            <person name="Mottagui-Tabar S."/>
            <person name="Mulder N."/>
            <person name="Nakano N."/>
            <person name="Nakauchi H."/>
            <person name="Ng P."/>
            <person name="Nilsson R."/>
            <person name="Nishiguchi S."/>
            <person name="Nishikawa S."/>
            <person name="Nori F."/>
            <person name="Ohara O."/>
            <person name="Okazaki Y."/>
            <person name="Orlando V."/>
            <person name="Pang K.C."/>
            <person name="Pavan W.J."/>
            <person name="Pavesi G."/>
            <person name="Pesole G."/>
            <person name="Petrovsky N."/>
            <person name="Piazza S."/>
            <person name="Reed J."/>
            <person name="Reid J.F."/>
            <person name="Ring B.Z."/>
            <person name="Ringwald M."/>
            <person name="Rost B."/>
            <person name="Ruan Y."/>
            <person name="Salzberg S.L."/>
            <person name="Sandelin A."/>
            <person name="Schneider C."/>
            <person name="Schoenbach C."/>
            <person name="Sekiguchi K."/>
            <person name="Semple C.A."/>
            <person name="Seno S."/>
            <person name="Sessa L."/>
            <person name="Sheng Y."/>
            <person name="Shibata Y."/>
            <person name="Shimada H."/>
            <person name="Shimada K."/>
            <person name="Silva D."/>
            <person name="Sinclair B."/>
            <person name="Sperling S."/>
            <person name="Stupka E."/>
            <person name="Sugiura K."/>
            <person name="Sultana R."/>
            <person name="Takenaka Y."/>
            <person name="Taki K."/>
            <person name="Tammoja K."/>
            <person name="Tan S.L."/>
            <person name="Tang S."/>
            <person name="Taylor M.S."/>
            <person name="Tegner J."/>
            <person name="Teichmann S.A."/>
            <person name="Ueda H.R."/>
            <person name="van Nimwegen E."/>
            <person name="Verardo R."/>
            <person name="Wei C.L."/>
            <person name="Yagi K."/>
            <person name="Yamanishi H."/>
            <person name="Zabarovsky E."/>
            <person name="Zhu S."/>
            <person name="Zimmer A."/>
            <person name="Hide W."/>
            <person name="Bult C."/>
            <person name="Grimmond S.M."/>
            <person name="Teasdale R.D."/>
            <person name="Liu E.T."/>
            <person name="Brusic V."/>
            <person name="Quackenbush J."/>
            <person name="Wahlestedt C."/>
            <person name="Mattick J.S."/>
            <person name="Hume D.A."/>
            <person name="Kai C."/>
            <person name="Sasaki D."/>
            <person name="Tomaru Y."/>
            <person name="Fukuda S."/>
            <person name="Kanamori-Katayama M."/>
            <person name="Suzuki M."/>
            <person name="Aoki J."/>
            <person name="Arakawa T."/>
            <person name="Iida J."/>
            <person name="Imamura K."/>
            <person name="Itoh M."/>
            <person name="Kato T."/>
            <person name="Kawaji H."/>
            <person name="Kawagashira N."/>
            <person name="Kawashima T."/>
            <person name="Kojima M."/>
            <person name="Kondo S."/>
            <person name="Konno H."/>
            <person name="Nakano K."/>
            <person name="Ninomiya N."/>
            <person name="Nishio T."/>
            <person name="Okada M."/>
            <person name="Plessy C."/>
            <person name="Shibata K."/>
            <person name="Shiraki T."/>
            <person name="Suzuki S."/>
            <person name="Tagami M."/>
            <person name="Waki K."/>
            <person name="Watahiki A."/>
            <person name="Okamura-Oho Y."/>
            <person name="Suzuki H."/>
            <person name="Kawai J."/>
            <person name="Hayashizaki Y."/>
        </authorList>
    </citation>
    <scope>NUCLEOTIDE SEQUENCE [LARGE SCALE MRNA]</scope>
    <source>
        <strain>C57BL/6J</strain>
        <tissue>Cerebellum</tissue>
        <tissue>Testis</tissue>
    </source>
</reference>
<reference key="2">
    <citation type="journal article" date="2004" name="Genome Res.">
        <title>The status, quality, and expansion of the NIH full-length cDNA project: the Mammalian Gene Collection (MGC).</title>
        <authorList>
            <consortium name="The MGC Project Team"/>
        </authorList>
    </citation>
    <scope>NUCLEOTIDE SEQUENCE [LARGE SCALE MRNA]</scope>
    <source>
        <tissue>Brain</tissue>
    </source>
</reference>
<reference key="3">
    <citation type="journal article" date="2010" name="Cell">
        <title>A tissue-specific atlas of mouse protein phosphorylation and expression.</title>
        <authorList>
            <person name="Huttlin E.L."/>
            <person name="Jedrychowski M.P."/>
            <person name="Elias J.E."/>
            <person name="Goswami T."/>
            <person name="Rad R."/>
            <person name="Beausoleil S.A."/>
            <person name="Villen J."/>
            <person name="Haas W."/>
            <person name="Sowa M.E."/>
            <person name="Gygi S.P."/>
        </authorList>
    </citation>
    <scope>IDENTIFICATION BY MASS SPECTROMETRY [LARGE SCALE ANALYSIS]</scope>
    <source>
        <tissue>Testis</tissue>
    </source>
</reference>
<proteinExistence type="evidence at protein level"/>
<accession>Q8C8J0</accession>
<accession>B2RQW3</accession>
<organism>
    <name type="scientific">Mus musculus</name>
    <name type="common">Mouse</name>
    <dbReference type="NCBI Taxonomy" id="10090"/>
    <lineage>
        <taxon>Eukaryota</taxon>
        <taxon>Metazoa</taxon>
        <taxon>Chordata</taxon>
        <taxon>Craniata</taxon>
        <taxon>Vertebrata</taxon>
        <taxon>Euteleostomi</taxon>
        <taxon>Mammalia</taxon>
        <taxon>Eutheria</taxon>
        <taxon>Euarchontoglires</taxon>
        <taxon>Glires</taxon>
        <taxon>Rodentia</taxon>
        <taxon>Myomorpha</taxon>
        <taxon>Muroidea</taxon>
        <taxon>Muridae</taxon>
        <taxon>Murinae</taxon>
        <taxon>Mus</taxon>
        <taxon>Mus</taxon>
    </lineage>
</organism>
<evidence type="ECO:0000256" key="1">
    <source>
        <dbReference type="SAM" id="MobiDB-lite"/>
    </source>
</evidence>
<keyword id="KW-1185">Reference proteome</keyword>
<keyword id="KW-0677">Repeat</keyword>
<protein>
    <recommendedName>
        <fullName>Sperm-tail PG-rich repeat-containing protein 2</fullName>
    </recommendedName>
</protein>
<gene>
    <name type="primary">Stpg2</name>
</gene>
<dbReference type="EMBL" id="AK046955">
    <property type="protein sequence ID" value="BAC32926.1"/>
    <property type="molecule type" value="mRNA"/>
</dbReference>
<dbReference type="EMBL" id="AK161389">
    <property type="protein sequence ID" value="BAE36367.1"/>
    <property type="molecule type" value="mRNA"/>
</dbReference>
<dbReference type="EMBL" id="BC138108">
    <property type="protein sequence ID" value="AAI38109.1"/>
    <property type="molecule type" value="mRNA"/>
</dbReference>
<dbReference type="EMBL" id="BC138109">
    <property type="protein sequence ID" value="AAI38110.1"/>
    <property type="molecule type" value="mRNA"/>
</dbReference>
<dbReference type="CCDS" id="CCDS17871.1"/>
<dbReference type="RefSeq" id="NP_941061.1">
    <property type="nucleotide sequence ID" value="NM_198659.3"/>
</dbReference>
<dbReference type="FunCoup" id="Q8C8J0">
    <property type="interactions" value="2"/>
</dbReference>
<dbReference type="STRING" id="10090.ENSMUSP00000051539"/>
<dbReference type="PhosphoSitePlus" id="Q8C8J0"/>
<dbReference type="PaxDb" id="10090-ENSMUSP00000051539"/>
<dbReference type="ProteomicsDB" id="257093"/>
<dbReference type="Antibodypedia" id="67933">
    <property type="antibodies" value="24 antibodies from 7 providers"/>
</dbReference>
<dbReference type="Ensembl" id="ENSMUST00000062306.7">
    <property type="protein sequence ID" value="ENSMUSP00000051539.7"/>
    <property type="gene ID" value="ENSMUSG00000047940.14"/>
</dbReference>
<dbReference type="Ensembl" id="ENSMUST00000106239.8">
    <property type="protein sequence ID" value="ENSMUSP00000101846.2"/>
    <property type="gene ID" value="ENSMUSG00000047940.14"/>
</dbReference>
<dbReference type="GeneID" id="381476"/>
<dbReference type="KEGG" id="mmu:381476"/>
<dbReference type="UCSC" id="uc008rny.1">
    <property type="organism name" value="mouse"/>
</dbReference>
<dbReference type="AGR" id="MGI:2685863"/>
<dbReference type="CTD" id="285555"/>
<dbReference type="MGI" id="MGI:2685863">
    <property type="gene designation" value="Stpg2"/>
</dbReference>
<dbReference type="VEuPathDB" id="HostDB:ENSMUSG00000047940"/>
<dbReference type="eggNOG" id="KOG1198">
    <property type="taxonomic scope" value="Eukaryota"/>
</dbReference>
<dbReference type="GeneTree" id="ENSGT00390000001063"/>
<dbReference type="HOGENOM" id="CLU_040300_1_0_1"/>
<dbReference type="InParanoid" id="Q8C8J0"/>
<dbReference type="OMA" id="NDPRHAL"/>
<dbReference type="OrthoDB" id="406368at2759"/>
<dbReference type="PhylomeDB" id="Q8C8J0"/>
<dbReference type="TreeFam" id="TF328881"/>
<dbReference type="BioGRID-ORCS" id="381476">
    <property type="hits" value="1 hit in 78 CRISPR screens"/>
</dbReference>
<dbReference type="ChiTaRS" id="Stpg2">
    <property type="organism name" value="mouse"/>
</dbReference>
<dbReference type="PRO" id="PR:Q8C8J0"/>
<dbReference type="Proteomes" id="UP000000589">
    <property type="component" value="Chromosome 3"/>
</dbReference>
<dbReference type="RNAct" id="Q8C8J0">
    <property type="molecule type" value="protein"/>
</dbReference>
<dbReference type="Bgee" id="ENSMUSG00000047940">
    <property type="expression patterns" value="Expressed in spermatocyte and 8 other cell types or tissues"/>
</dbReference>
<dbReference type="InterPro" id="IPR051291">
    <property type="entry name" value="CIMAP"/>
</dbReference>
<dbReference type="InterPro" id="IPR010736">
    <property type="entry name" value="SHIPPO-rpt"/>
</dbReference>
<dbReference type="PANTHER" id="PTHR21580">
    <property type="entry name" value="SHIPPO-1-RELATED"/>
    <property type="match status" value="1"/>
</dbReference>
<dbReference type="PANTHER" id="PTHR21580:SF60">
    <property type="entry name" value="SPERM-TAIL PG-RICH REPEAT-CONTAINING PROTEIN 2"/>
    <property type="match status" value="1"/>
</dbReference>
<dbReference type="Pfam" id="PF07004">
    <property type="entry name" value="SHIPPO-rpt"/>
    <property type="match status" value="7"/>
</dbReference>
<name>STPG2_MOUSE</name>
<feature type="chain" id="PRO_0000311961" description="Sperm-tail PG-rich repeat-containing protein 2">
    <location>
        <begin position="1"/>
        <end position="561"/>
    </location>
</feature>
<feature type="repeat" description="STPGR 1">
    <location>
        <begin position="21"/>
        <end position="34"/>
    </location>
</feature>
<feature type="repeat" description="STPGR 2">
    <location>
        <begin position="63"/>
        <end position="72"/>
    </location>
</feature>
<feature type="repeat" description="STPGR 3">
    <location>
        <begin position="97"/>
        <end position="104"/>
    </location>
</feature>
<feature type="repeat" description="STPGR 4">
    <location>
        <begin position="164"/>
        <end position="191"/>
    </location>
</feature>
<feature type="repeat" description="STPGR 5">
    <location>
        <begin position="200"/>
        <end position="210"/>
    </location>
</feature>
<feature type="repeat" description="STPGR 6">
    <location>
        <begin position="250"/>
        <end position="285"/>
    </location>
</feature>
<feature type="repeat" description="STPGR 7">
    <location>
        <begin position="292"/>
        <end position="299"/>
    </location>
</feature>
<feature type="repeat" description="STPGR 8">
    <location>
        <begin position="334"/>
        <end position="367"/>
    </location>
</feature>
<feature type="repeat" description="STPGR 9">
    <location>
        <begin position="421"/>
        <end position="438"/>
    </location>
</feature>
<feature type="repeat" description="STPGR 10">
    <location>
        <begin position="471"/>
        <end position="481"/>
    </location>
</feature>
<feature type="region of interest" description="Disordered" evidence="1">
    <location>
        <begin position="123"/>
        <end position="143"/>
    </location>
</feature>
<sequence>MYDRAPRWLDCANRGSTEEHVGPGTYQVPFPKQQATGCYAPFLSLSSKTSACVVSSDAGQAVPGPAHYNVSQAQYNIRGGRSLQNREKRFKKLISDGPGPGSYNWPYLGTLCITTRQKTPRTPAVSRNIDIPSIPSSGKSHGYHLNDDDTIMRRTPPPSDNTIGPAYYNPQFDYPKASLKYKGVNFGNATGRQEFLKYSGPGPGQYDIIQKRKLHCENINIKREQEHNYYTYVPRLYEAIILQEEKKGVPGPGKYNIKSEFDMIKSMSALVNSPSFIFFSETERFEPIKSCTPAPGTYNEIRTAFKCPKKRFGLSLPFNQSAARFTEDSKAQKLPGPGFYDISTNIVKAQVKKPCLKKQPKTGFGSSVPRTLFTAQKKAFRGPGPSDYQVRGTHDELPNLNKSAAFLSRAEKTPPVRKMRLPAPGRYDVQKSYDMSQVKHKYMPPRTSVAKKRHSSFLSAAPRCLGKIADGPGPATYSPVLMKSGAIISFVKGPKRFQEFHGEFSPGPTTYELSPFLRHSLLKRTYNVTLPCSSSPNRENTGCPSQKATQKFQREKLQYFN</sequence>